<dbReference type="EMBL" id="M35995">
    <property type="protein sequence ID" value="AAA85374.1"/>
    <property type="molecule type" value="Genomic_DNA"/>
</dbReference>
<dbReference type="EMBL" id="M35995">
    <property type="protein sequence ID" value="AAA85375.1"/>
    <property type="molecule type" value="Genomic_DNA"/>
</dbReference>
<dbReference type="EMBL" id="X15901">
    <property type="protein sequence ID" value="CAA33977.1"/>
    <property type="molecule type" value="Genomic_DNA"/>
</dbReference>
<dbReference type="EMBL" id="AY522330">
    <property type="status" value="NOT_ANNOTATED_CDS"/>
    <property type="molecule type" value="Genomic_DNA"/>
</dbReference>
<dbReference type="EMBL" id="AP003280">
    <property type="status" value="NOT_ANNOTATED_CDS"/>
    <property type="molecule type" value="Genomic_DNA"/>
</dbReference>
<dbReference type="PIR" id="JQ0256">
    <property type="entry name" value="CBRZ6"/>
</dbReference>
<dbReference type="RefSeq" id="NP_039415.1">
    <molecule id="P12123-1"/>
    <property type="nucleotide sequence ID" value="NC_001320.1"/>
</dbReference>
<dbReference type="RefSeq" id="YP_009305333.1">
    <property type="nucleotide sequence ID" value="NC_031333.1"/>
</dbReference>
<dbReference type="SMR" id="P12123"/>
<dbReference type="FunCoup" id="P12123">
    <property type="interactions" value="371"/>
</dbReference>
<dbReference type="STRING" id="39947.P12123"/>
<dbReference type="PaxDb" id="39947-P12123"/>
<dbReference type="GeneID" id="29141401"/>
<dbReference type="GeneID" id="3131403"/>
<dbReference type="KEGG" id="dosa:petB"/>
<dbReference type="KEGG" id="osa:3131403"/>
<dbReference type="InParanoid" id="P12123"/>
<dbReference type="OrthoDB" id="770670at2759"/>
<dbReference type="Proteomes" id="UP000000763">
    <property type="component" value="Chromosome 1"/>
</dbReference>
<dbReference type="Proteomes" id="UP000059680">
    <property type="component" value="Chloroplast"/>
</dbReference>
<dbReference type="GO" id="GO:0009535">
    <property type="term" value="C:chloroplast thylakoid membrane"/>
    <property type="evidence" value="ECO:0007669"/>
    <property type="project" value="UniProtKB-SubCell"/>
</dbReference>
<dbReference type="GO" id="GO:0016020">
    <property type="term" value="C:membrane"/>
    <property type="evidence" value="ECO:0000318"/>
    <property type="project" value="GO_Central"/>
</dbReference>
<dbReference type="GO" id="GO:0009536">
    <property type="term" value="C:plastid"/>
    <property type="evidence" value="ECO:0000250"/>
    <property type="project" value="Gramene"/>
</dbReference>
<dbReference type="GO" id="GO:0045158">
    <property type="term" value="F:electron transporter, transferring electrons within cytochrome b6/f complex of photosystem II activity"/>
    <property type="evidence" value="ECO:0007669"/>
    <property type="project" value="UniProtKB-UniRule"/>
</dbReference>
<dbReference type="GO" id="GO:0046872">
    <property type="term" value="F:metal ion binding"/>
    <property type="evidence" value="ECO:0007669"/>
    <property type="project" value="UniProtKB-KW"/>
</dbReference>
<dbReference type="GO" id="GO:0016491">
    <property type="term" value="F:oxidoreductase activity"/>
    <property type="evidence" value="ECO:0007669"/>
    <property type="project" value="InterPro"/>
</dbReference>
<dbReference type="GO" id="GO:0015979">
    <property type="term" value="P:photosynthesis"/>
    <property type="evidence" value="ECO:0007669"/>
    <property type="project" value="UniProtKB-UniRule"/>
</dbReference>
<dbReference type="GO" id="GO:0022904">
    <property type="term" value="P:respiratory electron transport chain"/>
    <property type="evidence" value="ECO:0007669"/>
    <property type="project" value="InterPro"/>
</dbReference>
<dbReference type="CDD" id="cd00284">
    <property type="entry name" value="Cytochrome_b_N"/>
    <property type="match status" value="1"/>
</dbReference>
<dbReference type="FunFam" id="1.20.810.10:FF:000001">
    <property type="entry name" value="Cytochrome b6"/>
    <property type="match status" value="1"/>
</dbReference>
<dbReference type="Gene3D" id="1.20.810.10">
    <property type="entry name" value="Cytochrome Bc1 Complex, Chain C"/>
    <property type="match status" value="1"/>
</dbReference>
<dbReference type="HAMAP" id="MF_00633">
    <property type="entry name" value="Cytb6_f_cytb6"/>
    <property type="match status" value="1"/>
</dbReference>
<dbReference type="InterPro" id="IPR005797">
    <property type="entry name" value="Cyt_b/b6_N"/>
</dbReference>
<dbReference type="InterPro" id="IPR023530">
    <property type="entry name" value="Cyt_B6_PetB"/>
</dbReference>
<dbReference type="InterPro" id="IPR027387">
    <property type="entry name" value="Cytb/b6-like_sf"/>
</dbReference>
<dbReference type="InterPro" id="IPR048259">
    <property type="entry name" value="Cytochrome_b_N_euk/bac"/>
</dbReference>
<dbReference type="InterPro" id="IPR016174">
    <property type="entry name" value="Di-haem_cyt_TM"/>
</dbReference>
<dbReference type="NCBIfam" id="NF002990">
    <property type="entry name" value="PRK03735.1"/>
    <property type="match status" value="1"/>
</dbReference>
<dbReference type="PANTHER" id="PTHR19271">
    <property type="entry name" value="CYTOCHROME B"/>
    <property type="match status" value="1"/>
</dbReference>
<dbReference type="PANTHER" id="PTHR19271:SF16">
    <property type="entry name" value="CYTOCHROME B"/>
    <property type="match status" value="1"/>
</dbReference>
<dbReference type="Pfam" id="PF00033">
    <property type="entry name" value="Cytochrome_B"/>
    <property type="match status" value="1"/>
</dbReference>
<dbReference type="PIRSF" id="PIRSF000032">
    <property type="entry name" value="Cytochrome_b6"/>
    <property type="match status" value="1"/>
</dbReference>
<dbReference type="SUPFAM" id="SSF81342">
    <property type="entry name" value="Transmembrane di-heme cytochromes"/>
    <property type="match status" value="1"/>
</dbReference>
<dbReference type="PROSITE" id="PS51002">
    <property type="entry name" value="CYTB_NTER"/>
    <property type="match status" value="1"/>
</dbReference>
<reference key="1">
    <citation type="journal article" date="1988" name="Plant Mol. Biol.">
        <title>Nucleotide sequence of the rice chloroplast apocytochrome b6 gene (petB).</title>
        <authorList>
            <person name="Cote J.C."/>
            <person name="Wu N.H."/>
            <person name="Wu R."/>
        </authorList>
        <dbReference type="AGRICOLA" id="IND91035204"/>
    </citation>
    <scope>NUCLEOTIDE SEQUENCE [GENOMIC DNA] (ISOFORMS 1 AND 2)</scope>
</reference>
<reference key="2">
    <citation type="journal article" date="1989" name="Mol. Gen. Genet.">
        <title>The complete sequence of the rice (Oryza sativa) chloroplast genome: intermolecular recombination between distinct tRNA genes accounts for a major plastid DNA inversion during the evolution of the cereals.</title>
        <authorList>
            <person name="Hiratsuka J."/>
            <person name="Shimada H."/>
            <person name="Whittier R."/>
            <person name="Ishibashi T."/>
            <person name="Sakamoto M."/>
            <person name="Mori M."/>
            <person name="Kondo C."/>
            <person name="Honji Y."/>
            <person name="Sun C.-R."/>
            <person name="Meng B.-Y."/>
            <person name="Li Y.-Q."/>
            <person name="Kanno A."/>
            <person name="Nishizawa Y."/>
            <person name="Hirai A."/>
            <person name="Shinozaki K."/>
            <person name="Sugiura M."/>
        </authorList>
    </citation>
    <scope>NUCLEOTIDE SEQUENCE [LARGE SCALE GENOMIC DNA]</scope>
    <source>
        <strain>cv. Nipponbare</strain>
    </source>
</reference>
<reference key="3">
    <citation type="journal article" date="2004" name="Plant Physiol.">
        <title>A comparison of rice chloroplast genomes.</title>
        <authorList>
            <person name="Tang J."/>
            <person name="Xia H."/>
            <person name="Cao M."/>
            <person name="Zhang X."/>
            <person name="Zeng W."/>
            <person name="Hu S."/>
            <person name="Tong W."/>
            <person name="Wang J."/>
            <person name="Wang J."/>
            <person name="Yu J."/>
            <person name="Yang H."/>
            <person name="Zhu L."/>
        </authorList>
    </citation>
    <scope>NUCLEOTIDE SEQUENCE [LARGE SCALE GENOMIC DNA]</scope>
    <source>
        <strain>cv. Nipponbare</strain>
    </source>
</reference>
<reference key="4">
    <citation type="journal article" date="2002" name="Nature">
        <title>The genome sequence and structure of rice chromosome 1.</title>
        <authorList>
            <person name="Sasaki T."/>
            <person name="Matsumoto T."/>
            <person name="Yamamoto K."/>
            <person name="Sakata K."/>
            <person name="Baba T."/>
            <person name="Katayose Y."/>
            <person name="Wu J."/>
            <person name="Niimura Y."/>
            <person name="Cheng Z."/>
            <person name="Nagamura Y."/>
            <person name="Antonio B.A."/>
            <person name="Kanamori H."/>
            <person name="Hosokawa S."/>
            <person name="Masukawa M."/>
            <person name="Arikawa K."/>
            <person name="Chiden Y."/>
            <person name="Hayashi M."/>
            <person name="Okamoto M."/>
            <person name="Ando T."/>
            <person name="Aoki H."/>
            <person name="Arita K."/>
            <person name="Hamada M."/>
            <person name="Harada C."/>
            <person name="Hijishita S."/>
            <person name="Honda M."/>
            <person name="Ichikawa Y."/>
            <person name="Idonuma A."/>
            <person name="Iijima M."/>
            <person name="Ikeda M."/>
            <person name="Ikeno M."/>
            <person name="Ito S."/>
            <person name="Ito T."/>
            <person name="Ito Y."/>
            <person name="Ito Y."/>
            <person name="Iwabuchi A."/>
            <person name="Kamiya K."/>
            <person name="Karasawa W."/>
            <person name="Katagiri S."/>
            <person name="Kikuta A."/>
            <person name="Kobayashi N."/>
            <person name="Kono I."/>
            <person name="Machita K."/>
            <person name="Maehara T."/>
            <person name="Mizuno H."/>
            <person name="Mizubayashi T."/>
            <person name="Mukai Y."/>
            <person name="Nagasaki H."/>
            <person name="Nakashima M."/>
            <person name="Nakama Y."/>
            <person name="Nakamichi Y."/>
            <person name="Nakamura M."/>
            <person name="Namiki N."/>
            <person name="Negishi M."/>
            <person name="Ohta I."/>
            <person name="Ono N."/>
            <person name="Saji S."/>
            <person name="Sakai K."/>
            <person name="Shibata M."/>
            <person name="Shimokawa T."/>
            <person name="Shomura A."/>
            <person name="Song J."/>
            <person name="Takazaki Y."/>
            <person name="Terasawa K."/>
            <person name="Tsuji K."/>
            <person name="Waki K."/>
            <person name="Yamagata H."/>
            <person name="Yamane H."/>
            <person name="Yoshiki S."/>
            <person name="Yoshihara R."/>
            <person name="Yukawa K."/>
            <person name="Zhong H."/>
            <person name="Iwama H."/>
            <person name="Endo T."/>
            <person name="Ito H."/>
            <person name="Hahn J.H."/>
            <person name="Kim H.-I."/>
            <person name="Eun M.-Y."/>
            <person name="Yano M."/>
            <person name="Jiang J."/>
            <person name="Gojobori T."/>
        </authorList>
    </citation>
    <scope>NUCLEOTIDE SEQUENCE [LARGE SCALE GENOMIC DNA]</scope>
    <source>
        <strain>cv. Nipponbare</strain>
    </source>
</reference>
<geneLocation type="chloroplast"/>
<evidence type="ECO:0000255" key="1">
    <source>
        <dbReference type="HAMAP-Rule" id="MF_00633"/>
    </source>
</evidence>
<evidence type="ECO:0000305" key="2"/>
<gene>
    <name evidence="1" type="primary">petB</name>
</gene>
<proteinExistence type="inferred from homology"/>
<name>CYB6_ORYSJ</name>
<keyword id="KW-0025">Alternative splicing</keyword>
<keyword id="KW-0150">Chloroplast</keyword>
<keyword id="KW-0249">Electron transport</keyword>
<keyword id="KW-0349">Heme</keyword>
<keyword id="KW-0408">Iron</keyword>
<keyword id="KW-0472">Membrane</keyword>
<keyword id="KW-0479">Metal-binding</keyword>
<keyword id="KW-0602">Photosynthesis</keyword>
<keyword id="KW-0934">Plastid</keyword>
<keyword id="KW-1185">Reference proteome</keyword>
<keyword id="KW-0793">Thylakoid</keyword>
<keyword id="KW-0812">Transmembrane</keyword>
<keyword id="KW-1133">Transmembrane helix</keyword>
<keyword id="KW-0813">Transport</keyword>
<feature type="chain" id="PRO_0000061809" description="Cytochrome b6">
    <location>
        <begin position="1"/>
        <end position="215"/>
    </location>
</feature>
<feature type="transmembrane region" description="Helical" evidence="1">
    <location>
        <begin position="32"/>
        <end position="52"/>
    </location>
</feature>
<feature type="transmembrane region" description="Helical" evidence="1">
    <location>
        <begin position="90"/>
        <end position="110"/>
    </location>
</feature>
<feature type="transmembrane region" description="Helical" evidence="1">
    <location>
        <begin position="116"/>
        <end position="136"/>
    </location>
</feature>
<feature type="transmembrane region" description="Helical" evidence="1">
    <location>
        <begin position="186"/>
        <end position="206"/>
    </location>
</feature>
<feature type="binding site" description="covalent" evidence="1">
    <location>
        <position position="35"/>
    </location>
    <ligand>
        <name>heme c</name>
        <dbReference type="ChEBI" id="CHEBI:61717"/>
    </ligand>
</feature>
<feature type="binding site" description="axial binding residue" evidence="1">
    <location>
        <position position="86"/>
    </location>
    <ligand>
        <name>heme b</name>
        <dbReference type="ChEBI" id="CHEBI:60344"/>
        <label>2</label>
    </ligand>
    <ligandPart>
        <name>Fe</name>
        <dbReference type="ChEBI" id="CHEBI:18248"/>
    </ligandPart>
</feature>
<feature type="binding site" description="axial binding residue" evidence="1">
    <location>
        <position position="100"/>
    </location>
    <ligand>
        <name>heme b</name>
        <dbReference type="ChEBI" id="CHEBI:60344"/>
        <label>1</label>
    </ligand>
    <ligandPart>
        <name>Fe</name>
        <dbReference type="ChEBI" id="CHEBI:18248"/>
    </ligandPart>
</feature>
<feature type="binding site" description="axial binding residue" evidence="1">
    <location>
        <position position="187"/>
    </location>
    <ligand>
        <name>heme b</name>
        <dbReference type="ChEBI" id="CHEBI:60344"/>
        <label>2</label>
    </ligand>
    <ligandPart>
        <name>Fe</name>
        <dbReference type="ChEBI" id="CHEBI:18248"/>
    </ligandPart>
</feature>
<feature type="binding site" description="axial binding residue" evidence="1">
    <location>
        <position position="202"/>
    </location>
    <ligand>
        <name>heme b</name>
        <dbReference type="ChEBI" id="CHEBI:60344"/>
        <label>1</label>
    </ligand>
    <ligandPart>
        <name>Fe</name>
        <dbReference type="ChEBI" id="CHEBI:18248"/>
    </ligandPart>
</feature>
<feature type="splice variant" id="VSP_007117" description="In isoform 2." evidence="2">
    <original>MS</original>
    <variation>MKFSYTVLGGGFGLVTYLN</variation>
    <location>
        <begin position="1"/>
        <end position="2"/>
    </location>
</feature>
<sequence>MSKVYDWFEERLEIQAIADDITSKYVPPHVNIFYCLGGITLTCFLVQVATGFAMTFYYRPTVTEAFSSVQYIMTEANFGWLIRSVHRWSASMMVLMMILHVFRVYLTGGFKKPRELTWVTGVVLAVLTASFGVTGYSLPWDQIGYWAVKIVTGVPDAIPVIGSPLVELLRGSASVGQSTLTRFYSLHTFVLPLLTAVFMLMHFLMIRKQGISGPL</sequence>
<protein>
    <recommendedName>
        <fullName evidence="1">Cytochrome b6</fullName>
    </recommendedName>
</protein>
<comment type="function">
    <text evidence="1">Component of the cytochrome b6-f complex, which mediates electron transfer between photosystem II (PSII) and photosystem I (PSI), cyclic electron flow around PSI, and state transitions.</text>
</comment>
<comment type="cofactor">
    <cofactor evidence="1">
        <name>heme b</name>
        <dbReference type="ChEBI" id="CHEBI:60344"/>
    </cofactor>
    <text evidence="1">Binds 2 heme b groups non-covalently with two histidine residues as axial ligands.</text>
</comment>
<comment type="cofactor">
    <cofactor evidence="1">
        <name>heme c</name>
        <dbReference type="ChEBI" id="CHEBI:61717"/>
    </cofactor>
    <text evidence="1">Binds one heme group covalently by a single cysteine link with no axial amino acid ligand. This heme was named heme ci.</text>
</comment>
<comment type="subunit">
    <text evidence="1">The 4 large subunits of the cytochrome b6-f complex are cytochrome b6, subunit IV (17 kDa polypeptide, PetD), cytochrome f and the Rieske protein, while the 4 small subunits are PetG, PetL, PetM and PetN. The complex functions as a dimer.</text>
</comment>
<comment type="subcellular location">
    <subcellularLocation>
        <location evidence="1">Plastid</location>
        <location evidence="1">Chloroplast thylakoid membrane</location>
        <topology evidence="1">Multi-pass membrane protein</topology>
    </subcellularLocation>
</comment>
<comment type="alternative products">
    <event type="alternative splicing"/>
    <isoform>
        <id>P12123-1</id>
        <name>1</name>
        <sequence type="displayed"/>
    </isoform>
    <isoform>
        <id>P12123-2</id>
        <name>2</name>
        <sequence type="described" ref="VSP_007117"/>
    </isoform>
</comment>
<comment type="miscellaneous">
    <text evidence="1">Heme 1 (or BH or b566) is high-potential and absorbs at about 566 nm, and heme 2 (or BL or b562) is low-potential and absorbs at about 562 nm.</text>
</comment>
<comment type="miscellaneous">
    <molecule>Isoform 2</molecule>
    <text evidence="2">Unspliced isoform.</text>
</comment>
<comment type="similarity">
    <text evidence="1">Belongs to the cytochrome b family. PetB subfamily.</text>
</comment>
<organism>
    <name type="scientific">Oryza sativa subsp. japonica</name>
    <name type="common">Rice</name>
    <dbReference type="NCBI Taxonomy" id="39947"/>
    <lineage>
        <taxon>Eukaryota</taxon>
        <taxon>Viridiplantae</taxon>
        <taxon>Streptophyta</taxon>
        <taxon>Embryophyta</taxon>
        <taxon>Tracheophyta</taxon>
        <taxon>Spermatophyta</taxon>
        <taxon>Magnoliopsida</taxon>
        <taxon>Liliopsida</taxon>
        <taxon>Poales</taxon>
        <taxon>Poaceae</taxon>
        <taxon>BOP clade</taxon>
        <taxon>Oryzoideae</taxon>
        <taxon>Oryzeae</taxon>
        <taxon>Oryzinae</taxon>
        <taxon>Oryza</taxon>
        <taxon>Oryza sativa</taxon>
    </lineage>
</organism>
<accession>P12123</accession>
<accession>Q36615</accession>
<accession>Q8S1Q7</accession>